<feature type="chain" id="PRO_1000002635" description="UDP-N-acetylglucosamine--N-acetylmuramyl-(pentapeptide) pyrophosphoryl-undecaprenol N-acetylglucosamine transferase">
    <location>
        <begin position="1"/>
        <end position="354"/>
    </location>
</feature>
<feature type="binding site" evidence="1">
    <location>
        <begin position="11"/>
        <end position="13"/>
    </location>
    <ligand>
        <name>UDP-N-acetyl-alpha-D-glucosamine</name>
        <dbReference type="ChEBI" id="CHEBI:57705"/>
    </ligand>
</feature>
<feature type="binding site" evidence="1">
    <location>
        <position position="164"/>
    </location>
    <ligand>
        <name>UDP-N-acetyl-alpha-D-glucosamine</name>
        <dbReference type="ChEBI" id="CHEBI:57705"/>
    </ligand>
</feature>
<feature type="binding site" evidence="1">
    <location>
        <position position="194"/>
    </location>
    <ligand>
        <name>UDP-N-acetyl-alpha-D-glucosamine</name>
        <dbReference type="ChEBI" id="CHEBI:57705"/>
    </ligand>
</feature>
<feature type="binding site" evidence="1">
    <location>
        <position position="289"/>
    </location>
    <ligand>
        <name>UDP-N-acetyl-alpha-D-glucosamine</name>
        <dbReference type="ChEBI" id="CHEBI:57705"/>
    </ligand>
</feature>
<name>MURG_CLOBL</name>
<gene>
    <name evidence="1" type="primary">murG</name>
    <name type="ordered locus">CLI_2811</name>
</gene>
<comment type="function">
    <text evidence="1">Cell wall formation. Catalyzes the transfer of a GlcNAc subunit on undecaprenyl-pyrophosphoryl-MurNAc-pentapeptide (lipid intermediate I) to form undecaprenyl-pyrophosphoryl-MurNAc-(pentapeptide)GlcNAc (lipid intermediate II).</text>
</comment>
<comment type="catalytic activity">
    <reaction evidence="1">
        <text>di-trans,octa-cis-undecaprenyl diphospho-N-acetyl-alpha-D-muramoyl-L-alanyl-D-glutamyl-meso-2,6-diaminopimeloyl-D-alanyl-D-alanine + UDP-N-acetyl-alpha-D-glucosamine = di-trans,octa-cis-undecaprenyl diphospho-[N-acetyl-alpha-D-glucosaminyl-(1-&gt;4)]-N-acetyl-alpha-D-muramoyl-L-alanyl-D-glutamyl-meso-2,6-diaminopimeloyl-D-alanyl-D-alanine + UDP + H(+)</text>
        <dbReference type="Rhea" id="RHEA:31227"/>
        <dbReference type="ChEBI" id="CHEBI:15378"/>
        <dbReference type="ChEBI" id="CHEBI:57705"/>
        <dbReference type="ChEBI" id="CHEBI:58223"/>
        <dbReference type="ChEBI" id="CHEBI:61387"/>
        <dbReference type="ChEBI" id="CHEBI:61388"/>
        <dbReference type="EC" id="2.4.1.227"/>
    </reaction>
</comment>
<comment type="pathway">
    <text evidence="1">Cell wall biogenesis; peptidoglycan biosynthesis.</text>
</comment>
<comment type="subcellular location">
    <subcellularLocation>
        <location evidence="1">Cell membrane</location>
        <topology evidence="1">Peripheral membrane protein</topology>
        <orientation evidence="1">Cytoplasmic side</orientation>
    </subcellularLocation>
</comment>
<comment type="similarity">
    <text evidence="1">Belongs to the glycosyltransferase 28 family. MurG subfamily.</text>
</comment>
<organism>
    <name type="scientific">Clostridium botulinum (strain Langeland / NCTC 10281 / Type F)</name>
    <dbReference type="NCBI Taxonomy" id="441772"/>
    <lineage>
        <taxon>Bacteria</taxon>
        <taxon>Bacillati</taxon>
        <taxon>Bacillota</taxon>
        <taxon>Clostridia</taxon>
        <taxon>Eubacteriales</taxon>
        <taxon>Clostridiaceae</taxon>
        <taxon>Clostridium</taxon>
    </lineage>
</organism>
<accession>A7GGX9</accession>
<sequence>MKKIIMTGGGTAGHVTPNLALVPELKKSGYEIKYIGSIEGIERKIIEKEGIEYFPISSGKLRRYFDLKNFSDPFKVLKGVFQAKKIIKREKPDIVFSKGGFVTVPVVIAAHLNKIPVIAHESDITPGLANKLATPYCTRVCVTFPESVKHIKGDKAVLTGTPIRRELLEGNKLEGIKLCGFKDNKPILLIIGGSLGSKIINEIVRKNLDNILSKFNIIHICGKSNLDENLENRKGYAQFEYVNEELPDLMKASDLVISRAGANVIYELLALKKPNLLIPLSKKSSRGDQILNAASFEKSGYSLVLKEEELEDKTLMKKLNYLYENRNVYINNMSKSKMDNGVKNITELIKKYTK</sequence>
<dbReference type="EC" id="2.4.1.227" evidence="1"/>
<dbReference type="EMBL" id="CP000728">
    <property type="protein sequence ID" value="ABS40042.1"/>
    <property type="molecule type" value="Genomic_DNA"/>
</dbReference>
<dbReference type="RefSeq" id="WP_012100580.1">
    <property type="nucleotide sequence ID" value="NC_009699.1"/>
</dbReference>
<dbReference type="SMR" id="A7GGX9"/>
<dbReference type="CAZy" id="GT28">
    <property type="family name" value="Glycosyltransferase Family 28"/>
</dbReference>
<dbReference type="KEGG" id="cbf:CLI_2811"/>
<dbReference type="HOGENOM" id="CLU_037404_0_0_9"/>
<dbReference type="UniPathway" id="UPA00219"/>
<dbReference type="Proteomes" id="UP000002410">
    <property type="component" value="Chromosome"/>
</dbReference>
<dbReference type="GO" id="GO:0005886">
    <property type="term" value="C:plasma membrane"/>
    <property type="evidence" value="ECO:0007669"/>
    <property type="project" value="UniProtKB-SubCell"/>
</dbReference>
<dbReference type="GO" id="GO:0051991">
    <property type="term" value="F:UDP-N-acetyl-D-glucosamine:N-acetylmuramoyl-L-alanyl-D-glutamyl-meso-2,6-diaminopimelyl-D-alanyl-D-alanine-diphosphoundecaprenol 4-beta-N-acetylglucosaminlytransferase activity"/>
    <property type="evidence" value="ECO:0007669"/>
    <property type="project" value="RHEA"/>
</dbReference>
<dbReference type="GO" id="GO:0050511">
    <property type="term" value="F:undecaprenyldiphospho-muramoylpentapeptide beta-N-acetylglucosaminyltransferase activity"/>
    <property type="evidence" value="ECO:0007669"/>
    <property type="project" value="UniProtKB-UniRule"/>
</dbReference>
<dbReference type="GO" id="GO:0005975">
    <property type="term" value="P:carbohydrate metabolic process"/>
    <property type="evidence" value="ECO:0007669"/>
    <property type="project" value="InterPro"/>
</dbReference>
<dbReference type="GO" id="GO:0051301">
    <property type="term" value="P:cell division"/>
    <property type="evidence" value="ECO:0007669"/>
    <property type="project" value="UniProtKB-KW"/>
</dbReference>
<dbReference type="GO" id="GO:0071555">
    <property type="term" value="P:cell wall organization"/>
    <property type="evidence" value="ECO:0007669"/>
    <property type="project" value="UniProtKB-KW"/>
</dbReference>
<dbReference type="GO" id="GO:0030259">
    <property type="term" value="P:lipid glycosylation"/>
    <property type="evidence" value="ECO:0007669"/>
    <property type="project" value="UniProtKB-UniRule"/>
</dbReference>
<dbReference type="GO" id="GO:0009252">
    <property type="term" value="P:peptidoglycan biosynthetic process"/>
    <property type="evidence" value="ECO:0007669"/>
    <property type="project" value="UniProtKB-UniRule"/>
</dbReference>
<dbReference type="GO" id="GO:0008360">
    <property type="term" value="P:regulation of cell shape"/>
    <property type="evidence" value="ECO:0007669"/>
    <property type="project" value="UniProtKB-KW"/>
</dbReference>
<dbReference type="CDD" id="cd03785">
    <property type="entry name" value="GT28_MurG"/>
    <property type="match status" value="1"/>
</dbReference>
<dbReference type="Gene3D" id="3.40.50.2000">
    <property type="entry name" value="Glycogen Phosphorylase B"/>
    <property type="match status" value="2"/>
</dbReference>
<dbReference type="HAMAP" id="MF_00033">
    <property type="entry name" value="MurG"/>
    <property type="match status" value="1"/>
</dbReference>
<dbReference type="InterPro" id="IPR006009">
    <property type="entry name" value="GlcNAc_MurG"/>
</dbReference>
<dbReference type="InterPro" id="IPR007235">
    <property type="entry name" value="Glyco_trans_28_C"/>
</dbReference>
<dbReference type="InterPro" id="IPR004276">
    <property type="entry name" value="GlycoTrans_28_N"/>
</dbReference>
<dbReference type="NCBIfam" id="TIGR01133">
    <property type="entry name" value="murG"/>
    <property type="match status" value="1"/>
</dbReference>
<dbReference type="NCBIfam" id="NF009102">
    <property type="entry name" value="PRK12446.1"/>
    <property type="match status" value="1"/>
</dbReference>
<dbReference type="PANTHER" id="PTHR21015:SF27">
    <property type="entry name" value="UDP-N-ACETYLGLUCOSAMINE--N-ACETYLMURAMYL-(PENTAPEPTIDE) PYROPHOSPHORYL-UNDECAPRENOL N-ACETYLGLUCOSAMINE TRANSFERASE"/>
    <property type="match status" value="1"/>
</dbReference>
<dbReference type="PANTHER" id="PTHR21015">
    <property type="entry name" value="UDP-N-ACETYLGLUCOSAMINE--N-ACETYLMURAMYL-(PENTAPEPTIDE) PYROPHOSPHORYL-UNDECAPRENOL N-ACETYLGLUCOSAMINE TRANSFERASE 1"/>
    <property type="match status" value="1"/>
</dbReference>
<dbReference type="Pfam" id="PF04101">
    <property type="entry name" value="Glyco_tran_28_C"/>
    <property type="match status" value="1"/>
</dbReference>
<dbReference type="Pfam" id="PF03033">
    <property type="entry name" value="Glyco_transf_28"/>
    <property type="match status" value="1"/>
</dbReference>
<dbReference type="SUPFAM" id="SSF53756">
    <property type="entry name" value="UDP-Glycosyltransferase/glycogen phosphorylase"/>
    <property type="match status" value="1"/>
</dbReference>
<protein>
    <recommendedName>
        <fullName evidence="1">UDP-N-acetylglucosamine--N-acetylmuramyl-(pentapeptide) pyrophosphoryl-undecaprenol N-acetylglucosamine transferase</fullName>
        <ecNumber evidence="1">2.4.1.227</ecNumber>
    </recommendedName>
    <alternativeName>
        <fullName evidence="1">Undecaprenyl-PP-MurNAc-pentapeptide-UDPGlcNAc GlcNAc transferase</fullName>
    </alternativeName>
</protein>
<reference key="1">
    <citation type="submission" date="2007-06" db="EMBL/GenBank/DDBJ databases">
        <authorList>
            <person name="Brinkac L.M."/>
            <person name="Daugherty S."/>
            <person name="Dodson R.J."/>
            <person name="Madupu R."/>
            <person name="Brown J.L."/>
            <person name="Bruce D."/>
            <person name="Detter C."/>
            <person name="Munk C."/>
            <person name="Smith L.A."/>
            <person name="Smith T.J."/>
            <person name="White O."/>
            <person name="Brettin T.S."/>
        </authorList>
    </citation>
    <scope>NUCLEOTIDE SEQUENCE [LARGE SCALE GENOMIC DNA]</scope>
    <source>
        <strain>Langeland / NCTC 10281 / Type F</strain>
    </source>
</reference>
<evidence type="ECO:0000255" key="1">
    <source>
        <dbReference type="HAMAP-Rule" id="MF_00033"/>
    </source>
</evidence>
<proteinExistence type="inferred from homology"/>
<keyword id="KW-0131">Cell cycle</keyword>
<keyword id="KW-0132">Cell division</keyword>
<keyword id="KW-1003">Cell membrane</keyword>
<keyword id="KW-0133">Cell shape</keyword>
<keyword id="KW-0961">Cell wall biogenesis/degradation</keyword>
<keyword id="KW-0328">Glycosyltransferase</keyword>
<keyword id="KW-0472">Membrane</keyword>
<keyword id="KW-0573">Peptidoglycan synthesis</keyword>
<keyword id="KW-0808">Transferase</keyword>